<keyword id="KW-1015">Disulfide bond</keyword>
<keyword id="KW-0964">Secreted</keyword>
<evidence type="ECO:0000250" key="1">
    <source>
        <dbReference type="UniProtKB" id="P24605"/>
    </source>
</evidence>
<evidence type="ECO:0000303" key="2">
    <source>
    </source>
</evidence>
<evidence type="ECO:0000305" key="3"/>
<evidence type="ECO:0000305" key="4">
    <source>
    </source>
</evidence>
<accession>O42188</accession>
<dbReference type="EMBL" id="AF015243">
    <property type="protein sequence ID" value="AAB71845.1"/>
    <property type="molecule type" value="mRNA"/>
</dbReference>
<dbReference type="SMR" id="O42188"/>
<dbReference type="GO" id="GO:0005576">
    <property type="term" value="C:extracellular region"/>
    <property type="evidence" value="ECO:0007669"/>
    <property type="project" value="UniProtKB-SubCell"/>
</dbReference>
<dbReference type="GO" id="GO:0005509">
    <property type="term" value="F:calcium ion binding"/>
    <property type="evidence" value="ECO:0007669"/>
    <property type="project" value="InterPro"/>
</dbReference>
<dbReference type="GO" id="GO:0047498">
    <property type="term" value="F:calcium-dependent phospholipase A2 activity"/>
    <property type="evidence" value="ECO:0007669"/>
    <property type="project" value="TreeGrafter"/>
</dbReference>
<dbReference type="GO" id="GO:0005543">
    <property type="term" value="F:phospholipid binding"/>
    <property type="evidence" value="ECO:0007669"/>
    <property type="project" value="TreeGrafter"/>
</dbReference>
<dbReference type="GO" id="GO:0050482">
    <property type="term" value="P:arachidonate secretion"/>
    <property type="evidence" value="ECO:0007669"/>
    <property type="project" value="InterPro"/>
</dbReference>
<dbReference type="GO" id="GO:0016042">
    <property type="term" value="P:lipid catabolic process"/>
    <property type="evidence" value="ECO:0007669"/>
    <property type="project" value="InterPro"/>
</dbReference>
<dbReference type="GO" id="GO:0042130">
    <property type="term" value="P:negative regulation of T cell proliferation"/>
    <property type="evidence" value="ECO:0007669"/>
    <property type="project" value="TreeGrafter"/>
</dbReference>
<dbReference type="GO" id="GO:0006644">
    <property type="term" value="P:phospholipid metabolic process"/>
    <property type="evidence" value="ECO:0007669"/>
    <property type="project" value="InterPro"/>
</dbReference>
<dbReference type="CDD" id="cd00125">
    <property type="entry name" value="PLA2c"/>
    <property type="match status" value="1"/>
</dbReference>
<dbReference type="FunFam" id="1.20.90.10:FF:000001">
    <property type="entry name" value="Basic phospholipase A2 homolog"/>
    <property type="match status" value="1"/>
</dbReference>
<dbReference type="Gene3D" id="1.20.90.10">
    <property type="entry name" value="Phospholipase A2 domain"/>
    <property type="match status" value="1"/>
</dbReference>
<dbReference type="InterPro" id="IPR001211">
    <property type="entry name" value="PLipase_A2"/>
</dbReference>
<dbReference type="InterPro" id="IPR033112">
    <property type="entry name" value="PLipase_A2_Asp_AS"/>
</dbReference>
<dbReference type="InterPro" id="IPR016090">
    <property type="entry name" value="PLipase_A2_dom"/>
</dbReference>
<dbReference type="InterPro" id="IPR036444">
    <property type="entry name" value="PLipase_A2_dom_sf"/>
</dbReference>
<dbReference type="InterPro" id="IPR033113">
    <property type="entry name" value="PLipase_A2_His_AS"/>
</dbReference>
<dbReference type="PANTHER" id="PTHR11716">
    <property type="entry name" value="PHOSPHOLIPASE A2 FAMILY MEMBER"/>
    <property type="match status" value="1"/>
</dbReference>
<dbReference type="PANTHER" id="PTHR11716:SF9">
    <property type="entry name" value="PHOSPHOLIPASE A2, MEMBRANE ASSOCIATED"/>
    <property type="match status" value="1"/>
</dbReference>
<dbReference type="Pfam" id="PF00068">
    <property type="entry name" value="Phospholip_A2_1"/>
    <property type="match status" value="1"/>
</dbReference>
<dbReference type="PRINTS" id="PR00389">
    <property type="entry name" value="PHPHLIPASEA2"/>
</dbReference>
<dbReference type="SMART" id="SM00085">
    <property type="entry name" value="PA2c"/>
    <property type="match status" value="1"/>
</dbReference>
<dbReference type="SUPFAM" id="SSF48619">
    <property type="entry name" value="Phospholipase A2, PLA2"/>
    <property type="match status" value="1"/>
</dbReference>
<dbReference type="PROSITE" id="PS00119">
    <property type="entry name" value="PA2_ASP"/>
    <property type="match status" value="1"/>
</dbReference>
<dbReference type="PROSITE" id="PS00118">
    <property type="entry name" value="PA2_HIS"/>
    <property type="match status" value="1"/>
</dbReference>
<feature type="chain" id="PRO_0000161604" description="Basic phospholipase A2 homolog" evidence="2">
    <location>
        <begin position="1"/>
        <end position="122"/>
    </location>
</feature>
<feature type="region of interest" description="Important for membrane-damaging activities in eukaryotes and bacteria; heparin-binding" evidence="1">
    <location>
        <begin position="105"/>
        <end position="117"/>
    </location>
</feature>
<feature type="disulfide bond" evidence="1">
    <location>
        <begin position="26"/>
        <end position="115"/>
    </location>
</feature>
<feature type="disulfide bond" evidence="1">
    <location>
        <begin position="28"/>
        <end position="44"/>
    </location>
</feature>
<feature type="disulfide bond" evidence="1">
    <location>
        <begin position="43"/>
        <end position="95"/>
    </location>
</feature>
<feature type="disulfide bond" evidence="1">
    <location>
        <begin position="49"/>
        <end position="122"/>
    </location>
</feature>
<feature type="disulfide bond" evidence="1">
    <location>
        <begin position="50"/>
        <end position="88"/>
    </location>
</feature>
<feature type="disulfide bond" evidence="1">
    <location>
        <begin position="57"/>
        <end position="81"/>
    </location>
</feature>
<feature type="disulfide bond" evidence="1">
    <location>
        <begin position="75"/>
        <end position="86"/>
    </location>
</feature>
<name>PA2H_GLOHA</name>
<sequence length="122" mass="13876">NLIQFKKMIKKMTGKEPVVSYAFYGCYCGSGGRGKPKDATDRCCFVHNCCYEKVTGCDPKWDDYTYSWKNGTIVCGGDDPCKKEVCECDKAAAICFRDNLKTYKKRYMTYPNILCSSKSEKC</sequence>
<comment type="subcellular location">
    <subcellularLocation>
        <location evidence="4">Secreted</location>
    </subcellularLocation>
</comment>
<comment type="tissue specificity">
    <text evidence="4">Expressed by the venom gland.</text>
</comment>
<comment type="similarity">
    <text evidence="3">Belongs to the phospholipase A2 family. Group II subfamily. N49 sub-subfamily.</text>
</comment>
<comment type="caution">
    <text evidence="3">Does not bind calcium as one of the calcium-binding sites is lost (Asp-&gt;Asn in position 48, which corresponds to 'Asn-49' in the current nomenclature).</text>
</comment>
<protein>
    <recommendedName>
        <fullName>Basic phospholipase A2 homolog</fullName>
        <shortName>svPLA2 homolog</shortName>
    </recommendedName>
</protein>
<reference key="1">
    <citation type="journal article" date="1998" name="Toxicon">
        <title>Diversity of cDNAs encoding phospholipase A2 from Agkistrodon halys pallas venom, and its expression in E. coli.</title>
        <authorList>
            <person name="Pan H."/>
            <person name="Liu X.-L."/>
            <person name="Ou-Yang L.-L."/>
            <person name="Yang G.-Z."/>
            <person name="Zhou Y.-C."/>
            <person name="Li Z.-P."/>
            <person name="Wu X.-F."/>
        </authorList>
    </citation>
    <scope>NUCLEOTIDE SEQUENCE [MRNA]</scope>
    <source>
        <tissue>Venom gland</tissue>
    </source>
</reference>
<proteinExistence type="evidence at transcript level"/>
<organism>
    <name type="scientific">Gloydius halys</name>
    <name type="common">Chinese water mocassin</name>
    <name type="synonym">Agkistrodon halys</name>
    <dbReference type="NCBI Taxonomy" id="8714"/>
    <lineage>
        <taxon>Eukaryota</taxon>
        <taxon>Metazoa</taxon>
        <taxon>Chordata</taxon>
        <taxon>Craniata</taxon>
        <taxon>Vertebrata</taxon>
        <taxon>Euteleostomi</taxon>
        <taxon>Lepidosauria</taxon>
        <taxon>Squamata</taxon>
        <taxon>Bifurcata</taxon>
        <taxon>Unidentata</taxon>
        <taxon>Episquamata</taxon>
        <taxon>Toxicofera</taxon>
        <taxon>Serpentes</taxon>
        <taxon>Colubroidea</taxon>
        <taxon>Viperidae</taxon>
        <taxon>Crotalinae</taxon>
        <taxon>Gloydius</taxon>
    </lineage>
</organism>